<sequence>MQALNITPEQFSRLLRDHNLTREQFIALYRLRPLVYTPELPGRAKLALVLTGVLIFALALFGNALVFYVVTRSKAMRTVTNIFICSLALSDLLITFFCIPVTMLQNISDNWLGGAFICKMVPFVQSTAVVTEILTMTCIAVERHQGLVHPFKMKWQYTNRRAFTMLGVVWLVAVIVGSPMWHVQQLEIKYDFLYEKEHICCLEEWTSPVHQKIYTTFILVILFLLPLMVMLILYSKIGYELWIKKRVGDGSVLRTIHGKEMSKIARKKKRAVIMMVTVVALFAVCWAPFHVVHMMIEYSNFEKEYDDVTIKMIFAIVQIIGFSNSICNPIVYAFMNENFKKNVLSAVCYCIVNKTFSPAQRHGNSGITMMRKKAKFSLRENPVEETKGEAFSDGNIEVKLCEQTEEKKKLKRHLALFRSELAENSPLDSGH</sequence>
<keyword id="KW-0002">3D-structure</keyword>
<keyword id="KW-1003">Cell membrane</keyword>
<keyword id="KW-0297">G-protein coupled receptor</keyword>
<keyword id="KW-0325">Glycoprotein</keyword>
<keyword id="KW-0472">Membrane</keyword>
<keyword id="KW-0675">Receptor</keyword>
<keyword id="KW-1185">Reference proteome</keyword>
<keyword id="KW-0807">Transducer</keyword>
<keyword id="KW-0812">Transmembrane</keyword>
<keyword id="KW-1133">Transmembrane helix</keyword>
<protein>
    <recommendedName>
        <fullName>Pyroglutamylated RF-amide peptide receptor</fullName>
    </recommendedName>
    <alternativeName>
        <fullName>AQ27</fullName>
    </alternativeName>
    <alternativeName>
        <fullName>G-protein coupled receptor 103</fullName>
    </alternativeName>
    <alternativeName>
        <fullName>Orexigenic neuropeptide QRFP receptor</fullName>
    </alternativeName>
    <alternativeName>
        <fullName>SP9155</fullName>
    </alternativeName>
</protein>
<dbReference type="EMBL" id="AF411117">
    <property type="protein sequence ID" value="AAL26488.1"/>
    <property type="status" value="ALT_INIT"/>
    <property type="molecule type" value="mRNA"/>
</dbReference>
<dbReference type="EMBL" id="AB109629">
    <property type="protein sequence ID" value="BAC98938.1"/>
    <property type="molecule type" value="mRNA"/>
</dbReference>
<dbReference type="CCDS" id="CCDS3719.1"/>
<dbReference type="RefSeq" id="NP_937822.2">
    <property type="nucleotide sequence ID" value="NM_198179.3"/>
</dbReference>
<dbReference type="PDB" id="8WZ2">
    <property type="method" value="EM"/>
    <property type="resolution" value="2.73 A"/>
    <property type="chains" value="R=1-431"/>
</dbReference>
<dbReference type="PDB" id="8ZH8">
    <property type="method" value="EM"/>
    <property type="resolution" value="3.19 A"/>
    <property type="chains" value="R=2-366"/>
</dbReference>
<dbReference type="PDBsum" id="8WZ2"/>
<dbReference type="PDBsum" id="8ZH8"/>
<dbReference type="EMDB" id="EMD-37944"/>
<dbReference type="EMDB" id="EMD-60096"/>
<dbReference type="SMR" id="Q96P65"/>
<dbReference type="BioGRID" id="123897">
    <property type="interactions" value="3"/>
</dbReference>
<dbReference type="CORUM" id="Q96P65"/>
<dbReference type="FunCoup" id="Q96P65">
    <property type="interactions" value="1025"/>
</dbReference>
<dbReference type="IntAct" id="Q96P65">
    <property type="interactions" value="2"/>
</dbReference>
<dbReference type="STRING" id="9606.ENSP00000377948"/>
<dbReference type="BindingDB" id="Q96P65"/>
<dbReference type="ChEMBL" id="CHEMBL5852"/>
<dbReference type="GuidetoPHARMACOLOGY" id="333"/>
<dbReference type="GlyCosmos" id="Q96P65">
    <property type="glycosylation" value="1 site, No reported glycans"/>
</dbReference>
<dbReference type="GlyGen" id="Q96P65">
    <property type="glycosylation" value="4 sites, 1 O-linked glycan (1 site)"/>
</dbReference>
<dbReference type="iPTMnet" id="Q96P65"/>
<dbReference type="PhosphoSitePlus" id="Q96P65"/>
<dbReference type="BioMuta" id="QRFPR"/>
<dbReference type="DMDM" id="47117904"/>
<dbReference type="MassIVE" id="Q96P65"/>
<dbReference type="PaxDb" id="9606-ENSP00000377948"/>
<dbReference type="PeptideAtlas" id="Q96P65"/>
<dbReference type="ProteomicsDB" id="77639"/>
<dbReference type="Antibodypedia" id="2965">
    <property type="antibodies" value="274 antibodies from 31 providers"/>
</dbReference>
<dbReference type="DNASU" id="84109"/>
<dbReference type="Ensembl" id="ENST00000394427.3">
    <property type="protein sequence ID" value="ENSP00000377948.2"/>
    <property type="gene ID" value="ENSG00000186867.11"/>
</dbReference>
<dbReference type="GeneID" id="84109"/>
<dbReference type="KEGG" id="hsa:84109"/>
<dbReference type="MANE-Select" id="ENST00000394427.3">
    <property type="protein sequence ID" value="ENSP00000377948.2"/>
    <property type="RefSeq nucleotide sequence ID" value="NM_198179.3"/>
    <property type="RefSeq protein sequence ID" value="NP_937822.2"/>
</dbReference>
<dbReference type="UCSC" id="uc010inj.2">
    <property type="organism name" value="human"/>
</dbReference>
<dbReference type="AGR" id="HGNC:15565"/>
<dbReference type="CTD" id="84109"/>
<dbReference type="DisGeNET" id="84109"/>
<dbReference type="GeneCards" id="QRFPR"/>
<dbReference type="HGNC" id="HGNC:15565">
    <property type="gene designation" value="QRFPR"/>
</dbReference>
<dbReference type="HPA" id="ENSG00000186867">
    <property type="expression patterns" value="Tissue enhanced (brain, heart muscle, kidney)"/>
</dbReference>
<dbReference type="MIM" id="606925">
    <property type="type" value="gene"/>
</dbReference>
<dbReference type="neXtProt" id="NX_Q96P65"/>
<dbReference type="OpenTargets" id="ENSG00000186867"/>
<dbReference type="PharmGKB" id="PA164725243"/>
<dbReference type="VEuPathDB" id="HostDB:ENSG00000186867"/>
<dbReference type="eggNOG" id="ENOG502QW2F">
    <property type="taxonomic scope" value="Eukaryota"/>
</dbReference>
<dbReference type="GeneTree" id="ENSGT01130000278294"/>
<dbReference type="InParanoid" id="Q96P65"/>
<dbReference type="OMA" id="IHMMIEY"/>
<dbReference type="OrthoDB" id="9979846at2759"/>
<dbReference type="PAN-GO" id="Q96P65">
    <property type="GO annotations" value="3 GO annotations based on evolutionary models"/>
</dbReference>
<dbReference type="PhylomeDB" id="Q96P65"/>
<dbReference type="TreeFam" id="TF315303"/>
<dbReference type="PathwayCommons" id="Q96P65"/>
<dbReference type="Reactome" id="R-HSA-389397">
    <property type="pathway name" value="Orexin and neuropeptides FF and QRFP bind to their respective receptors"/>
</dbReference>
<dbReference type="Reactome" id="R-HSA-416476">
    <property type="pathway name" value="G alpha (q) signalling events"/>
</dbReference>
<dbReference type="SignaLink" id="Q96P65"/>
<dbReference type="BioGRID-ORCS" id="84109">
    <property type="hits" value="13 hits in 1143 CRISPR screens"/>
</dbReference>
<dbReference type="ChiTaRS" id="QRFPR">
    <property type="organism name" value="human"/>
</dbReference>
<dbReference type="GeneWiki" id="Pyroglutamylated_RFamide_peptide_receptor"/>
<dbReference type="GenomeRNAi" id="84109"/>
<dbReference type="Pharos" id="Q96P65">
    <property type="development level" value="Tchem"/>
</dbReference>
<dbReference type="PRO" id="PR:Q96P65"/>
<dbReference type="Proteomes" id="UP000005640">
    <property type="component" value="Chromosome 4"/>
</dbReference>
<dbReference type="RNAct" id="Q96P65">
    <property type="molecule type" value="protein"/>
</dbReference>
<dbReference type="Bgee" id="ENSG00000186867">
    <property type="expression patterns" value="Expressed in primordial germ cell in gonad and 76 other cell types or tissues"/>
</dbReference>
<dbReference type="ExpressionAtlas" id="Q96P65">
    <property type="expression patterns" value="baseline and differential"/>
</dbReference>
<dbReference type="GO" id="GO:0016020">
    <property type="term" value="C:membrane"/>
    <property type="evidence" value="ECO:0000305"/>
    <property type="project" value="UniProtKB"/>
</dbReference>
<dbReference type="GO" id="GO:0005886">
    <property type="term" value="C:plasma membrane"/>
    <property type="evidence" value="ECO:0000318"/>
    <property type="project" value="GO_Central"/>
</dbReference>
<dbReference type="GO" id="GO:0004930">
    <property type="term" value="F:G protein-coupled receptor activity"/>
    <property type="evidence" value="ECO:0000314"/>
    <property type="project" value="UniProtKB"/>
</dbReference>
<dbReference type="GO" id="GO:0004983">
    <property type="term" value="F:neuropeptide Y receptor activity"/>
    <property type="evidence" value="ECO:0007669"/>
    <property type="project" value="InterPro"/>
</dbReference>
<dbReference type="GO" id="GO:0032870">
    <property type="term" value="P:cellular response to hormone stimulus"/>
    <property type="evidence" value="ECO:0000318"/>
    <property type="project" value="GO_Central"/>
</dbReference>
<dbReference type="GO" id="GO:0007186">
    <property type="term" value="P:G protein-coupled receptor signaling pathway"/>
    <property type="evidence" value="ECO:0000314"/>
    <property type="project" value="UniProtKB"/>
</dbReference>
<dbReference type="CDD" id="cd15205">
    <property type="entry name" value="7tmA_QRFPR"/>
    <property type="match status" value="1"/>
</dbReference>
<dbReference type="FunFam" id="1.20.1070.10:FF:000227">
    <property type="entry name" value="Pyroglutamylated RFamide peptide receptor a"/>
    <property type="match status" value="1"/>
</dbReference>
<dbReference type="Gene3D" id="1.20.1070.10">
    <property type="entry name" value="Rhodopsin 7-helix transmembrane proteins"/>
    <property type="match status" value="1"/>
</dbReference>
<dbReference type="InterPro" id="IPR000276">
    <property type="entry name" value="GPCR_Rhodpsn"/>
</dbReference>
<dbReference type="InterPro" id="IPR017452">
    <property type="entry name" value="GPCR_Rhodpsn_7TM"/>
</dbReference>
<dbReference type="InterPro" id="IPR000611">
    <property type="entry name" value="NPY_rcpt"/>
</dbReference>
<dbReference type="PANTHER" id="PTHR45695">
    <property type="entry name" value="LEUCOKININ RECEPTOR-RELATED"/>
    <property type="match status" value="1"/>
</dbReference>
<dbReference type="PANTHER" id="PTHR45695:SF20">
    <property type="entry name" value="PYROGLUTAMYLATED RFAMIDE PEPTIDE RECEPTOR"/>
    <property type="match status" value="1"/>
</dbReference>
<dbReference type="Pfam" id="PF00001">
    <property type="entry name" value="7tm_1"/>
    <property type="match status" value="1"/>
</dbReference>
<dbReference type="PRINTS" id="PR00237">
    <property type="entry name" value="GPCRRHODOPSN"/>
</dbReference>
<dbReference type="PRINTS" id="PR01012">
    <property type="entry name" value="NRPEPTIDEYR"/>
</dbReference>
<dbReference type="SUPFAM" id="SSF81321">
    <property type="entry name" value="Family A G protein-coupled receptor-like"/>
    <property type="match status" value="1"/>
</dbReference>
<dbReference type="PROSITE" id="PS00237">
    <property type="entry name" value="G_PROTEIN_RECEP_F1_1"/>
    <property type="match status" value="1"/>
</dbReference>
<dbReference type="PROSITE" id="PS50262">
    <property type="entry name" value="G_PROTEIN_RECEP_F1_2"/>
    <property type="match status" value="1"/>
</dbReference>
<evidence type="ECO:0000255" key="1"/>
<evidence type="ECO:0000255" key="2">
    <source>
        <dbReference type="PROSITE-ProRule" id="PRU00521"/>
    </source>
</evidence>
<evidence type="ECO:0000269" key="3">
    <source>
    </source>
</evidence>
<evidence type="ECO:0000269" key="4">
    <source>
    </source>
</evidence>
<evidence type="ECO:0000269" key="5">
    <source>
    </source>
</evidence>
<evidence type="ECO:0000305" key="6"/>
<evidence type="ECO:0007829" key="7">
    <source>
        <dbReference type="PDB" id="8WZ2"/>
    </source>
</evidence>
<organism>
    <name type="scientific">Homo sapiens</name>
    <name type="common">Human</name>
    <dbReference type="NCBI Taxonomy" id="9606"/>
    <lineage>
        <taxon>Eukaryota</taxon>
        <taxon>Metazoa</taxon>
        <taxon>Chordata</taxon>
        <taxon>Craniata</taxon>
        <taxon>Vertebrata</taxon>
        <taxon>Euteleostomi</taxon>
        <taxon>Mammalia</taxon>
        <taxon>Eutheria</taxon>
        <taxon>Euarchontoglires</taxon>
        <taxon>Primates</taxon>
        <taxon>Haplorrhini</taxon>
        <taxon>Catarrhini</taxon>
        <taxon>Hominidae</taxon>
        <taxon>Homo</taxon>
    </lineage>
</organism>
<accession>Q96P65</accession>
<reference key="1">
    <citation type="journal article" date="2001" name="Gene">
        <title>Discovery and mapping of ten novel G protein-coupled receptor genes.</title>
        <authorList>
            <person name="Lee D.K."/>
            <person name="Nguyen T."/>
            <person name="Lynch K.R."/>
            <person name="Cheng R."/>
            <person name="Vanti W.B."/>
            <person name="Arkhitko O."/>
            <person name="Lewis T."/>
            <person name="Evans J.F."/>
            <person name="George S.R."/>
            <person name="O'Dowd B.F."/>
        </authorList>
    </citation>
    <scope>NUCLEOTIDE SEQUENCE [MRNA]</scope>
    <scope>TISSUE SPECIFICITY</scope>
</reference>
<reference key="2">
    <citation type="journal article" date="2003" name="J. Biol. Chem.">
        <title>Identification and characterization of a novel RF-amide peptide ligand for orphan G-protein-coupled receptor SP9155.</title>
        <authorList>
            <person name="Jiang Y."/>
            <person name="Luo L."/>
            <person name="Gustafson E.L."/>
            <person name="Yadav D."/>
            <person name="Laverty M."/>
            <person name="Murgolo N."/>
            <person name="Vassileva G."/>
            <person name="Zeng M."/>
            <person name="Laz T.M."/>
            <person name="Behan J."/>
            <person name="Qiu P."/>
            <person name="Wang L."/>
            <person name="Wang S."/>
            <person name="Bayne M."/>
            <person name="Greene J."/>
            <person name="Monsma F.J. Jr."/>
            <person name="Zhang F.L."/>
        </authorList>
    </citation>
    <scope>NUCLEOTIDE SEQUENCE [MRNA]</scope>
    <scope>TISSUE SPECIFICITY</scope>
</reference>
<reference key="3">
    <citation type="journal article" date="2003" name="J. Biol. Chem.">
        <title>A new peptidic ligand and its receptor regulating adrenal function in rats.</title>
        <authorList>
            <person name="Fukusumi S."/>
            <person name="Yoshida H."/>
            <person name="Fujii R."/>
            <person name="Maruyama M."/>
            <person name="Komatsu H."/>
            <person name="Habata Y."/>
            <person name="Shintani Y."/>
            <person name="Hinuma S."/>
            <person name="Fujino M."/>
        </authorList>
    </citation>
    <scope>NUCLEOTIDE SEQUENCE [MRNA]</scope>
    <scope>FUNCTION</scope>
    <source>
        <tissue>Fetal brain</tissue>
    </source>
</reference>
<gene>
    <name type="primary">QRFPR</name>
    <name type="synonym">GPR103</name>
</gene>
<proteinExistence type="evidence at protein level"/>
<feature type="chain" id="PRO_0000070097" description="Pyroglutamylated RF-amide peptide receptor">
    <location>
        <begin position="1"/>
        <end position="431"/>
    </location>
</feature>
<feature type="topological domain" description="Extracellular" evidence="1">
    <location>
        <begin position="1"/>
        <end position="46"/>
    </location>
</feature>
<feature type="transmembrane region" description="Helical; Name=1" evidence="1">
    <location>
        <begin position="47"/>
        <end position="67"/>
    </location>
</feature>
<feature type="topological domain" description="Cytoplasmic" evidence="1">
    <location>
        <begin position="68"/>
        <end position="81"/>
    </location>
</feature>
<feature type="transmembrane region" description="Helical; Name=2" evidence="1">
    <location>
        <begin position="82"/>
        <end position="102"/>
    </location>
</feature>
<feature type="topological domain" description="Extracellular" evidence="1">
    <location>
        <begin position="103"/>
        <end position="120"/>
    </location>
</feature>
<feature type="transmembrane region" description="Helical; Name=3" evidence="1">
    <location>
        <begin position="121"/>
        <end position="141"/>
    </location>
</feature>
<feature type="topological domain" description="Cytoplasmic" evidence="1">
    <location>
        <begin position="142"/>
        <end position="162"/>
    </location>
</feature>
<feature type="transmembrane region" description="Helical; Name=4" evidence="1">
    <location>
        <begin position="163"/>
        <end position="183"/>
    </location>
</feature>
<feature type="topological domain" description="Extracellular" evidence="1">
    <location>
        <begin position="184"/>
        <end position="212"/>
    </location>
</feature>
<feature type="transmembrane region" description="Helical; Name=5" evidence="1">
    <location>
        <begin position="213"/>
        <end position="233"/>
    </location>
</feature>
<feature type="topological domain" description="Cytoplasmic" evidence="1">
    <location>
        <begin position="234"/>
        <end position="271"/>
    </location>
</feature>
<feature type="transmembrane region" description="Helical; Name=6" evidence="1">
    <location>
        <begin position="272"/>
        <end position="292"/>
    </location>
</feature>
<feature type="topological domain" description="Extracellular" evidence="1">
    <location>
        <begin position="293"/>
        <end position="311"/>
    </location>
</feature>
<feature type="transmembrane region" description="Helical; Name=7" evidence="1">
    <location>
        <begin position="312"/>
        <end position="332"/>
    </location>
</feature>
<feature type="topological domain" description="Cytoplasmic" evidence="1">
    <location>
        <begin position="333"/>
        <end position="431"/>
    </location>
</feature>
<feature type="glycosylation site" description="N-linked (GlcNAc...) asparagine" evidence="1">
    <location>
        <position position="19"/>
    </location>
</feature>
<feature type="sequence variant" id="VAR_049437" description="In dbSNP:rs17438900.">
    <original>F</original>
    <variation>V</variation>
    <location>
        <position position="61"/>
    </location>
</feature>
<feature type="sequence variant" id="VAR_049438" description="In dbSNP:rs11947418.">
    <original>H</original>
    <variation>Q</variation>
    <location>
        <position position="149"/>
    </location>
</feature>
<feature type="sequence variant" id="VAR_049439" description="In dbSNP:rs2302310.">
    <original>L</original>
    <variation>S</variation>
    <location>
        <position position="344"/>
    </location>
</feature>
<feature type="sequence conflict" description="In Ref. 3; BAC98938." evidence="6" ref="3">
    <original>LY</original>
    <variation>VH</variation>
    <location>
        <begin position="28"/>
        <end position="29"/>
    </location>
</feature>
<feature type="sequence conflict" description="In Ref. 1; AAL26488." evidence="6" ref="1">
    <original>VILFLLPLMVMLILYSKIGYELWIKKRVGDGSVLRTIHGKEMSKIAR</original>
    <variation>SSSSSCLLW</variation>
    <location>
        <begin position="220"/>
        <end position="266"/>
    </location>
</feature>
<feature type="helix" evidence="7">
    <location>
        <begin position="10"/>
        <end position="18"/>
    </location>
</feature>
<feature type="helix" evidence="7">
    <location>
        <begin position="23"/>
        <end position="29"/>
    </location>
</feature>
<feature type="helix" evidence="7">
    <location>
        <begin position="42"/>
        <end position="71"/>
    </location>
</feature>
<feature type="helix" evidence="7">
    <location>
        <begin position="75"/>
        <end position="77"/>
    </location>
</feature>
<feature type="helix" evidence="7">
    <location>
        <begin position="79"/>
        <end position="107"/>
    </location>
</feature>
<feature type="helix" evidence="7">
    <location>
        <begin position="117"/>
        <end position="148"/>
    </location>
</feature>
<feature type="helix" evidence="7">
    <location>
        <begin position="150"/>
        <end position="156"/>
    </location>
</feature>
<feature type="helix" evidence="7">
    <location>
        <begin position="159"/>
        <end position="183"/>
    </location>
</feature>
<feature type="strand" evidence="7">
    <location>
        <begin position="184"/>
        <end position="191"/>
    </location>
</feature>
<feature type="turn" evidence="7">
    <location>
        <begin position="192"/>
        <end position="195"/>
    </location>
</feature>
<feature type="strand" evidence="7">
    <location>
        <begin position="196"/>
        <end position="203"/>
    </location>
</feature>
<feature type="helix" evidence="7">
    <location>
        <begin position="208"/>
        <end position="222"/>
    </location>
</feature>
<feature type="helix" evidence="7">
    <location>
        <begin position="224"/>
        <end position="242"/>
    </location>
</feature>
<feature type="helix" evidence="7">
    <location>
        <begin position="262"/>
        <end position="297"/>
    </location>
</feature>
<feature type="helix" evidence="7">
    <location>
        <begin position="301"/>
        <end position="304"/>
    </location>
</feature>
<feature type="helix" evidence="7">
    <location>
        <begin position="307"/>
        <end position="322"/>
    </location>
</feature>
<feature type="helix" evidence="7">
    <location>
        <begin position="324"/>
        <end position="333"/>
    </location>
</feature>
<feature type="helix" evidence="7">
    <location>
        <begin position="337"/>
        <end position="343"/>
    </location>
</feature>
<name>QRFPR_HUMAN</name>
<comment type="function">
    <text evidence="5">Receptor for the orexigenic neuropeptide QRFP. The activity of this receptor is mediated by G proteins that modulate adenylate cyclase activity and intracellular calcium levels.</text>
</comment>
<comment type="interaction">
    <interactant intactId="EBI-12820497">
        <id>Q96P65</id>
    </interactant>
    <interactant intactId="EBI-17458373">
        <id>P48165</id>
        <label>GJA8</label>
    </interactant>
    <organismsDiffer>false</organismsDiffer>
    <experiments>3</experiments>
</comment>
<comment type="interaction">
    <interactant intactId="EBI-12820497">
        <id>Q96P65</id>
    </interactant>
    <interactant intactId="EBI-12027160">
        <id>Q9P121-3</id>
        <label>NTM</label>
    </interactant>
    <organismsDiffer>false</organismsDiffer>
    <experiments>3</experiments>
</comment>
<comment type="subcellular location">
    <subcellularLocation>
        <location>Cell membrane</location>
        <topology>Multi-pass membrane protein</topology>
    </subcellularLocation>
</comment>
<comment type="tissue specificity">
    <text evidence="3 4">Expressed widely in the brain with high levels in the hypothalamus, trigeminal ganglia and vestibular neurons, and moderate levels in the amygdala, cortex, pituitary, hippocampus, thalamus, caudate nucleus and medulla oblongata. In peripheral tissues, expressed at high levels in the retina and at moderate levels in the heart, kidney, testis and thyroid.</text>
</comment>
<comment type="similarity">
    <text evidence="2">Belongs to the G-protein coupled receptor 1 family.</text>
</comment>
<comment type="sequence caution" evidence="6">
    <conflict type="erroneous initiation">
        <sequence resource="EMBL-CDS" id="AAL26488"/>
    </conflict>
</comment>